<feature type="chain" id="PRO_1000099818" description="Anthranilate phosphoribosyltransferase">
    <location>
        <begin position="1"/>
        <end position="321"/>
    </location>
</feature>
<feature type="binding site" evidence="1">
    <location>
        <position position="72"/>
    </location>
    <ligand>
        <name>5-phospho-alpha-D-ribose 1-diphosphate</name>
        <dbReference type="ChEBI" id="CHEBI:58017"/>
    </ligand>
</feature>
<feature type="binding site" evidence="1">
    <location>
        <position position="72"/>
    </location>
    <ligand>
        <name>anthranilate</name>
        <dbReference type="ChEBI" id="CHEBI:16567"/>
        <label>1</label>
    </ligand>
</feature>
<feature type="binding site" evidence="1">
    <location>
        <begin position="75"/>
        <end position="76"/>
    </location>
    <ligand>
        <name>5-phospho-alpha-D-ribose 1-diphosphate</name>
        <dbReference type="ChEBI" id="CHEBI:58017"/>
    </ligand>
</feature>
<feature type="binding site" evidence="1">
    <location>
        <position position="80"/>
    </location>
    <ligand>
        <name>5-phospho-alpha-D-ribose 1-diphosphate</name>
        <dbReference type="ChEBI" id="CHEBI:58017"/>
    </ligand>
</feature>
<feature type="binding site" evidence="1">
    <location>
        <begin position="82"/>
        <end position="85"/>
    </location>
    <ligand>
        <name>5-phospho-alpha-D-ribose 1-diphosphate</name>
        <dbReference type="ChEBI" id="CHEBI:58017"/>
    </ligand>
</feature>
<feature type="binding site" evidence="1">
    <location>
        <position position="84"/>
    </location>
    <ligand>
        <name>Mg(2+)</name>
        <dbReference type="ChEBI" id="CHEBI:18420"/>
        <label>1</label>
    </ligand>
</feature>
<feature type="binding site" evidence="1">
    <location>
        <begin position="99"/>
        <end position="107"/>
    </location>
    <ligand>
        <name>5-phospho-alpha-D-ribose 1-diphosphate</name>
        <dbReference type="ChEBI" id="CHEBI:58017"/>
    </ligand>
</feature>
<feature type="binding site" evidence="1">
    <location>
        <position position="102"/>
    </location>
    <ligand>
        <name>anthranilate</name>
        <dbReference type="ChEBI" id="CHEBI:16567"/>
        <label>1</label>
    </ligand>
</feature>
<feature type="binding site" evidence="1">
    <location>
        <position position="111"/>
    </location>
    <ligand>
        <name>5-phospho-alpha-D-ribose 1-diphosphate</name>
        <dbReference type="ChEBI" id="CHEBI:58017"/>
    </ligand>
</feature>
<feature type="binding site" evidence="1">
    <location>
        <position position="157"/>
    </location>
    <ligand>
        <name>anthranilate</name>
        <dbReference type="ChEBI" id="CHEBI:16567"/>
        <label>2</label>
    </ligand>
</feature>
<feature type="binding site" evidence="1">
    <location>
        <position position="216"/>
    </location>
    <ligand>
        <name>Mg(2+)</name>
        <dbReference type="ChEBI" id="CHEBI:18420"/>
        <label>2</label>
    </ligand>
</feature>
<feature type="binding site" evidence="1">
    <location>
        <position position="217"/>
    </location>
    <ligand>
        <name>Mg(2+)</name>
        <dbReference type="ChEBI" id="CHEBI:18420"/>
        <label>1</label>
    </ligand>
</feature>
<feature type="binding site" evidence="1">
    <location>
        <position position="217"/>
    </location>
    <ligand>
        <name>Mg(2+)</name>
        <dbReference type="ChEBI" id="CHEBI:18420"/>
        <label>2</label>
    </ligand>
</feature>
<comment type="function">
    <text evidence="1">Catalyzes the transfer of the phosphoribosyl group of 5-phosphorylribose-1-pyrophosphate (PRPP) to anthranilate to yield N-(5'-phosphoribosyl)-anthranilate (PRA).</text>
</comment>
<comment type="catalytic activity">
    <reaction evidence="1">
        <text>N-(5-phospho-beta-D-ribosyl)anthranilate + diphosphate = 5-phospho-alpha-D-ribose 1-diphosphate + anthranilate</text>
        <dbReference type="Rhea" id="RHEA:11768"/>
        <dbReference type="ChEBI" id="CHEBI:16567"/>
        <dbReference type="ChEBI" id="CHEBI:18277"/>
        <dbReference type="ChEBI" id="CHEBI:33019"/>
        <dbReference type="ChEBI" id="CHEBI:58017"/>
        <dbReference type="EC" id="2.4.2.18"/>
    </reaction>
</comment>
<comment type="cofactor">
    <cofactor evidence="1">
        <name>Mg(2+)</name>
        <dbReference type="ChEBI" id="CHEBI:18420"/>
    </cofactor>
    <text evidence="1">Binds 2 magnesium ions per monomer.</text>
</comment>
<comment type="pathway">
    <text evidence="1">Amino-acid biosynthesis; L-tryptophan biosynthesis; L-tryptophan from chorismate: step 2/5.</text>
</comment>
<comment type="subunit">
    <text evidence="1">Homodimer.</text>
</comment>
<comment type="similarity">
    <text evidence="1">Belongs to the anthranilate phosphoribosyltransferase family.</text>
</comment>
<evidence type="ECO:0000255" key="1">
    <source>
        <dbReference type="HAMAP-Rule" id="MF_00211"/>
    </source>
</evidence>
<protein>
    <recommendedName>
        <fullName evidence="1">Anthranilate phosphoribosyltransferase</fullName>
        <ecNumber evidence="1">2.4.2.18</ecNumber>
    </recommendedName>
</protein>
<keyword id="KW-0028">Amino-acid biosynthesis</keyword>
<keyword id="KW-0057">Aromatic amino acid biosynthesis</keyword>
<keyword id="KW-0328">Glycosyltransferase</keyword>
<keyword id="KW-0460">Magnesium</keyword>
<keyword id="KW-0479">Metal-binding</keyword>
<keyword id="KW-0808">Transferase</keyword>
<keyword id="KW-0822">Tryptophan biosynthesis</keyword>
<gene>
    <name evidence="1" type="primary">trpD</name>
    <name type="ordered locus">MmarC7_0249</name>
</gene>
<sequence>MLNKLIERENLSFEESYELFNMLLNESEMRIAAYLVALQTKGVTADEIAGFAKAMRDNAVKIDLGEVTDTCGTGGDGSKTINVSTAVSIILSCFTKVAKHGNVSITSKSGSANVYEALGCKIPETPEDAKKSMDKTNFAFLFAPKYHPALKKIMPVRNELKVKTIFNILGPLANPANPKYQILGVNSPDLLDNVAIALSKVGGIKKALVLYGDGLDELTPNGTSKITEYNGKFETYEVTPKDFGLDYAKIMPCESPDESAKRLIDVFSGKLNEDRNFILMNAAAALYTSENASDFLDGVEIAKEAIESGKVLKKLEEIRNV</sequence>
<dbReference type="EC" id="2.4.2.18" evidence="1"/>
<dbReference type="EMBL" id="CP000745">
    <property type="protein sequence ID" value="ABR65319.1"/>
    <property type="molecule type" value="Genomic_DNA"/>
</dbReference>
<dbReference type="SMR" id="A6VFU3"/>
<dbReference type="STRING" id="426368.MmarC7_0249"/>
<dbReference type="KEGG" id="mmz:MmarC7_0249"/>
<dbReference type="eggNOG" id="arCOG02012">
    <property type="taxonomic scope" value="Archaea"/>
</dbReference>
<dbReference type="HOGENOM" id="CLU_034315_3_1_2"/>
<dbReference type="OrthoDB" id="8214at2157"/>
<dbReference type="UniPathway" id="UPA00035">
    <property type="reaction ID" value="UER00041"/>
</dbReference>
<dbReference type="GO" id="GO:0005829">
    <property type="term" value="C:cytosol"/>
    <property type="evidence" value="ECO:0007669"/>
    <property type="project" value="TreeGrafter"/>
</dbReference>
<dbReference type="GO" id="GO:0004048">
    <property type="term" value="F:anthranilate phosphoribosyltransferase activity"/>
    <property type="evidence" value="ECO:0007669"/>
    <property type="project" value="UniProtKB-UniRule"/>
</dbReference>
<dbReference type="GO" id="GO:0000287">
    <property type="term" value="F:magnesium ion binding"/>
    <property type="evidence" value="ECO:0007669"/>
    <property type="project" value="UniProtKB-UniRule"/>
</dbReference>
<dbReference type="GO" id="GO:0000162">
    <property type="term" value="P:L-tryptophan biosynthetic process"/>
    <property type="evidence" value="ECO:0007669"/>
    <property type="project" value="UniProtKB-UniRule"/>
</dbReference>
<dbReference type="FunFam" id="3.40.1030.10:FF:000010">
    <property type="entry name" value="Anthranilate phosphoribosyltransferase"/>
    <property type="match status" value="1"/>
</dbReference>
<dbReference type="Gene3D" id="3.40.1030.10">
    <property type="entry name" value="Nucleoside phosphorylase/phosphoribosyltransferase catalytic domain"/>
    <property type="match status" value="1"/>
</dbReference>
<dbReference type="Gene3D" id="1.20.970.10">
    <property type="entry name" value="Transferase, Pyrimidine Nucleoside Phosphorylase, Chain C"/>
    <property type="match status" value="1"/>
</dbReference>
<dbReference type="HAMAP" id="MF_00211">
    <property type="entry name" value="TrpD"/>
    <property type="match status" value="1"/>
</dbReference>
<dbReference type="InterPro" id="IPR005940">
    <property type="entry name" value="Anthranilate_Pribosyl_Tfrase"/>
</dbReference>
<dbReference type="InterPro" id="IPR000312">
    <property type="entry name" value="Glycosyl_Trfase_fam3"/>
</dbReference>
<dbReference type="InterPro" id="IPR017459">
    <property type="entry name" value="Glycosyl_Trfase_fam3_N_dom"/>
</dbReference>
<dbReference type="InterPro" id="IPR036320">
    <property type="entry name" value="Glycosyl_Trfase_fam3_N_dom_sf"/>
</dbReference>
<dbReference type="InterPro" id="IPR035902">
    <property type="entry name" value="Nuc_phospho_transferase"/>
</dbReference>
<dbReference type="NCBIfam" id="TIGR01245">
    <property type="entry name" value="trpD"/>
    <property type="match status" value="1"/>
</dbReference>
<dbReference type="PANTHER" id="PTHR43285">
    <property type="entry name" value="ANTHRANILATE PHOSPHORIBOSYLTRANSFERASE"/>
    <property type="match status" value="1"/>
</dbReference>
<dbReference type="PANTHER" id="PTHR43285:SF2">
    <property type="entry name" value="ANTHRANILATE PHOSPHORIBOSYLTRANSFERASE"/>
    <property type="match status" value="1"/>
</dbReference>
<dbReference type="Pfam" id="PF02885">
    <property type="entry name" value="Glycos_trans_3N"/>
    <property type="match status" value="1"/>
</dbReference>
<dbReference type="Pfam" id="PF00591">
    <property type="entry name" value="Glycos_transf_3"/>
    <property type="match status" value="1"/>
</dbReference>
<dbReference type="SUPFAM" id="SSF52418">
    <property type="entry name" value="Nucleoside phosphorylase/phosphoribosyltransferase catalytic domain"/>
    <property type="match status" value="1"/>
</dbReference>
<dbReference type="SUPFAM" id="SSF47648">
    <property type="entry name" value="Nucleoside phosphorylase/phosphoribosyltransferase N-terminal domain"/>
    <property type="match status" value="1"/>
</dbReference>
<accession>A6VFU3</accession>
<name>TRPD_METM7</name>
<proteinExistence type="inferred from homology"/>
<organism>
    <name type="scientific">Methanococcus maripaludis (strain C7 / ATCC BAA-1331)</name>
    <dbReference type="NCBI Taxonomy" id="426368"/>
    <lineage>
        <taxon>Archaea</taxon>
        <taxon>Methanobacteriati</taxon>
        <taxon>Methanobacteriota</taxon>
        <taxon>Methanomada group</taxon>
        <taxon>Methanococci</taxon>
        <taxon>Methanococcales</taxon>
        <taxon>Methanococcaceae</taxon>
        <taxon>Methanococcus</taxon>
    </lineage>
</organism>
<reference key="1">
    <citation type="submission" date="2007-06" db="EMBL/GenBank/DDBJ databases">
        <title>Complete sequence of Methanococcus maripaludis C7.</title>
        <authorList>
            <consortium name="US DOE Joint Genome Institute"/>
            <person name="Copeland A."/>
            <person name="Lucas S."/>
            <person name="Lapidus A."/>
            <person name="Barry K."/>
            <person name="Glavina del Rio T."/>
            <person name="Dalin E."/>
            <person name="Tice H."/>
            <person name="Pitluck S."/>
            <person name="Clum A."/>
            <person name="Schmutz J."/>
            <person name="Larimer F."/>
            <person name="Land M."/>
            <person name="Hauser L."/>
            <person name="Kyrpides N."/>
            <person name="Anderson I."/>
            <person name="Sieprawska-Lupa M."/>
            <person name="Whitman W.B."/>
            <person name="Richardson P."/>
        </authorList>
    </citation>
    <scope>NUCLEOTIDE SEQUENCE [LARGE SCALE GENOMIC DNA]</scope>
    <source>
        <strain>C7 / ATCC BAA-1331</strain>
    </source>
</reference>